<dbReference type="EMBL" id="AF182815">
    <property type="protein sequence ID" value="AAF40413.1"/>
    <property type="molecule type" value="mRNA"/>
</dbReference>
<dbReference type="EMBL" id="AF239804">
    <property type="protein sequence ID" value="AAF43715.1"/>
    <property type="molecule type" value="mRNA"/>
</dbReference>
<dbReference type="RefSeq" id="NP_990098.1">
    <molecule id="Q9IAK4-1"/>
    <property type="nucleotide sequence ID" value="NM_204767.2"/>
</dbReference>
<dbReference type="RefSeq" id="XP_015134803.1">
    <molecule id="Q9IAK4-2"/>
    <property type="nucleotide sequence ID" value="XM_015279317.4"/>
</dbReference>
<dbReference type="RefSeq" id="XP_046784670.1">
    <molecule id="Q9IAK4-2"/>
    <property type="nucleotide sequence ID" value="XM_046928714.1"/>
</dbReference>
<dbReference type="SMR" id="Q9IAK4"/>
<dbReference type="FunCoup" id="Q9IAK4">
    <property type="interactions" value="161"/>
</dbReference>
<dbReference type="STRING" id="9031.ENSGALP00000003955"/>
<dbReference type="GlyCosmos" id="Q9IAK4">
    <property type="glycosylation" value="8 sites, No reported glycans"/>
</dbReference>
<dbReference type="GlyGen" id="Q9IAK4">
    <property type="glycosylation" value="8 sites"/>
</dbReference>
<dbReference type="PaxDb" id="9031-ENSGALP00000003955"/>
<dbReference type="Ensembl" id="ENSGALT00010068897.1">
    <molecule id="Q9IAK4-1"/>
    <property type="protein sequence ID" value="ENSGALP00010042339.1"/>
    <property type="gene ID" value="ENSGALG00010028447.1"/>
</dbReference>
<dbReference type="Ensembl" id="ENSGALT00010068898.1">
    <molecule id="Q9IAK4-2"/>
    <property type="protein sequence ID" value="ENSGALP00010042340.1"/>
    <property type="gene ID" value="ENSGALG00010028447.1"/>
</dbReference>
<dbReference type="GeneID" id="395535"/>
<dbReference type="KEGG" id="gga:395535"/>
<dbReference type="CTD" id="10439"/>
<dbReference type="VEuPathDB" id="HostDB:geneid_395535"/>
<dbReference type="eggNOG" id="KOG3545">
    <property type="taxonomic scope" value="Eukaryota"/>
</dbReference>
<dbReference type="GeneTree" id="ENSGT00940000156959"/>
<dbReference type="HOGENOM" id="CLU_035236_0_0_1"/>
<dbReference type="InParanoid" id="Q9IAK4"/>
<dbReference type="OMA" id="CASAWAC"/>
<dbReference type="OrthoDB" id="8626508at2759"/>
<dbReference type="PhylomeDB" id="Q9IAK4"/>
<dbReference type="TreeFam" id="TF315964"/>
<dbReference type="PRO" id="PR:Q9IAK4"/>
<dbReference type="Proteomes" id="UP000000539">
    <property type="component" value="Chromosome 17"/>
</dbReference>
<dbReference type="Bgee" id="ENSGALG00000002515">
    <property type="expression patterns" value="Expressed in brain and 9 other cell types or tissues"/>
</dbReference>
<dbReference type="GO" id="GO:0030424">
    <property type="term" value="C:axon"/>
    <property type="evidence" value="ECO:0000250"/>
    <property type="project" value="UniProtKB"/>
</dbReference>
<dbReference type="GO" id="GO:0044295">
    <property type="term" value="C:axonal growth cone"/>
    <property type="evidence" value="ECO:0000250"/>
    <property type="project" value="UniProtKB"/>
</dbReference>
<dbReference type="GO" id="GO:0005783">
    <property type="term" value="C:endoplasmic reticulum"/>
    <property type="evidence" value="ECO:0000250"/>
    <property type="project" value="UniProtKB"/>
</dbReference>
<dbReference type="GO" id="GO:0005615">
    <property type="term" value="C:extracellular space"/>
    <property type="evidence" value="ECO:0000250"/>
    <property type="project" value="UniProtKB"/>
</dbReference>
<dbReference type="GO" id="GO:0043025">
    <property type="term" value="C:neuronal cell body"/>
    <property type="evidence" value="ECO:0000250"/>
    <property type="project" value="UniProtKB"/>
</dbReference>
<dbReference type="GO" id="GO:0043204">
    <property type="term" value="C:perikaryon"/>
    <property type="evidence" value="ECO:0007669"/>
    <property type="project" value="UniProtKB-SubCell"/>
</dbReference>
<dbReference type="GO" id="GO:0045202">
    <property type="term" value="C:synapse"/>
    <property type="evidence" value="ECO:0007669"/>
    <property type="project" value="UniProtKB-SubCell"/>
</dbReference>
<dbReference type="GO" id="GO:0003190">
    <property type="term" value="P:atrioventricular valve formation"/>
    <property type="evidence" value="ECO:0000315"/>
    <property type="project" value="AgBase"/>
</dbReference>
<dbReference type="GO" id="GO:0060317">
    <property type="term" value="P:cardiac epithelial to mesenchymal transition"/>
    <property type="evidence" value="ECO:0000315"/>
    <property type="project" value="AgBase"/>
</dbReference>
<dbReference type="GO" id="GO:0010629">
    <property type="term" value="P:negative regulation of gene expression"/>
    <property type="evidence" value="ECO:0000315"/>
    <property type="project" value="AgBase"/>
</dbReference>
<dbReference type="GO" id="GO:0023041">
    <property type="term" value="P:neuronal signal transduction"/>
    <property type="evidence" value="ECO:0000250"/>
    <property type="project" value="UniProtKB"/>
</dbReference>
<dbReference type="GO" id="GO:0043065">
    <property type="term" value="P:positive regulation of apoptotic process"/>
    <property type="evidence" value="ECO:0007669"/>
    <property type="project" value="Ensembl"/>
</dbReference>
<dbReference type="GO" id="GO:0010718">
    <property type="term" value="P:positive regulation of epithelial to mesenchymal transition"/>
    <property type="evidence" value="ECO:0000315"/>
    <property type="project" value="AgBase"/>
</dbReference>
<dbReference type="GO" id="GO:0010628">
    <property type="term" value="P:positive regulation of gene expression"/>
    <property type="evidence" value="ECO:0000315"/>
    <property type="project" value="AgBase"/>
</dbReference>
<dbReference type="GO" id="GO:0030516">
    <property type="term" value="P:regulation of axon extension"/>
    <property type="evidence" value="ECO:0000250"/>
    <property type="project" value="UniProtKB"/>
</dbReference>
<dbReference type="GO" id="GO:0007165">
    <property type="term" value="P:signal transduction"/>
    <property type="evidence" value="ECO:0000318"/>
    <property type="project" value="GO_Central"/>
</dbReference>
<dbReference type="InterPro" id="IPR022082">
    <property type="entry name" value="Noelin_dom"/>
</dbReference>
<dbReference type="InterPro" id="IPR003112">
    <property type="entry name" value="Olfac-like_dom"/>
</dbReference>
<dbReference type="InterPro" id="IPR050605">
    <property type="entry name" value="Olfactomedin-like_domain"/>
</dbReference>
<dbReference type="InterPro" id="IPR011044">
    <property type="entry name" value="Quino_amine_DH_bsu"/>
</dbReference>
<dbReference type="PANTHER" id="PTHR23192:SF34">
    <property type="entry name" value="NOELIN"/>
    <property type="match status" value="1"/>
</dbReference>
<dbReference type="PANTHER" id="PTHR23192">
    <property type="entry name" value="OLFACTOMEDIN-RELATED"/>
    <property type="match status" value="1"/>
</dbReference>
<dbReference type="Pfam" id="PF12308">
    <property type="entry name" value="Noelin-1"/>
    <property type="match status" value="1"/>
</dbReference>
<dbReference type="Pfam" id="PF02191">
    <property type="entry name" value="OLF"/>
    <property type="match status" value="1"/>
</dbReference>
<dbReference type="SMART" id="SM00284">
    <property type="entry name" value="OLF"/>
    <property type="match status" value="1"/>
</dbReference>
<dbReference type="SUPFAM" id="SSF50969">
    <property type="entry name" value="YVTN repeat-like/Quinoprotein amine dehydrogenase"/>
    <property type="match status" value="1"/>
</dbReference>
<dbReference type="PROSITE" id="PS00014">
    <property type="entry name" value="ER_TARGET"/>
    <property type="match status" value="1"/>
</dbReference>
<dbReference type="PROSITE" id="PS51132">
    <property type="entry name" value="OLF"/>
    <property type="match status" value="1"/>
</dbReference>
<keyword id="KW-0025">Alternative splicing</keyword>
<keyword id="KW-0966">Cell projection</keyword>
<keyword id="KW-0175">Coiled coil</keyword>
<keyword id="KW-0217">Developmental protein</keyword>
<keyword id="KW-1015">Disulfide bond</keyword>
<keyword id="KW-0256">Endoplasmic reticulum</keyword>
<keyword id="KW-0325">Glycoprotein</keyword>
<keyword id="KW-1185">Reference proteome</keyword>
<keyword id="KW-0964">Secreted</keyword>
<keyword id="KW-0732">Signal</keyword>
<keyword id="KW-0770">Synapse</keyword>
<sequence>MSVPLLKIGVVLSTMAMITNWMSQTLPSLVGLNTTKLTAASGGTLDRSTGVLPTNPEESWQVYSSAQDSEGRCICTVVAPQQTMCSRDARTKQLRQLLEKVQNMSQSIEVLDRRTQRDLQYVEKMENQMRGLESKFKQVEESHKQHLARQFKAIKAKMEELRPLIPVLEEYKADAKLVLQFKEEVQNLTSVLNELQEEIGAYDYEELQNRVSNLEERLRACMQKLACGKLTGISDPITIKTSGSRFGSWMTDPLAPEGENKVWYMDSYHNNRFVREYKSMADFMNTDNFTSHRLPHPWSGTGQVVYNGSIYFNKYQSHIIIRFDLKTETILKTRSLDYAGYNNMYHYAWGGHSDIDLMVDENGLWAVYATNQNAGNIVISKLDPNTLQSLQTWNTSYPKRSAGEAFIICGTLYVTNGYSGGTKVHYAYQTNASTYEYIDIPFQNKYSHISMLDYNPKDRALYAWNNGHQILYNVTLFHVIRSDEL</sequence>
<feature type="signal peptide" evidence="2">
    <location>
        <begin position="1"/>
        <end position="16"/>
    </location>
</feature>
<feature type="chain" id="PRO_0000020077" description="Noelin">
    <location>
        <begin position="17"/>
        <end position="485"/>
    </location>
</feature>
<feature type="domain" description="Olfactomedin-like" evidence="3">
    <location>
        <begin position="226"/>
        <end position="478"/>
    </location>
</feature>
<feature type="coiled-coil region" evidence="2">
    <location>
        <begin position="87"/>
        <end position="225"/>
    </location>
</feature>
<feature type="glycosylation site" description="N-linked (GlcNAc...) asparagine" evidence="2">
    <location>
        <position position="33"/>
    </location>
</feature>
<feature type="glycosylation site" description="N-linked (GlcNAc...) asparagine" evidence="2">
    <location>
        <position position="103"/>
    </location>
</feature>
<feature type="glycosylation site" description="N-linked (GlcNAc...) asparagine" evidence="2">
    <location>
        <position position="187"/>
    </location>
</feature>
<feature type="glycosylation site" description="N-linked (GlcNAc...) asparagine" evidence="2">
    <location>
        <position position="288"/>
    </location>
</feature>
<feature type="glycosylation site" description="N-linked (GlcNAc...) asparagine" evidence="2">
    <location>
        <position position="307"/>
    </location>
</feature>
<feature type="glycosylation site" description="N-linked (GlcNAc...) asparagine" evidence="2">
    <location>
        <position position="394"/>
    </location>
</feature>
<feature type="glycosylation site" description="N-linked (GlcNAc...) asparagine" evidence="2">
    <location>
        <position position="431"/>
    </location>
</feature>
<feature type="glycosylation site" description="N-linked (GlcNAc...) asparagine" evidence="2">
    <location>
        <position position="473"/>
    </location>
</feature>
<feature type="disulfide bond" description="Interchain" evidence="1">
    <location>
        <position position="221"/>
    </location>
</feature>
<feature type="disulfide bond" evidence="3">
    <location>
        <begin position="227"/>
        <end position="409"/>
    </location>
</feature>
<feature type="splice variant" id="VSP_003768" description="In isoform 2." evidence="5">
    <original>MSVPLLKIGVVLSTMAMITNWMSQTLPSLVGLNTTKLTAASGGTLDRSTG</original>
    <variation>MQPASKLLTLFFLILMGTELTQ</variation>
    <location>
        <begin position="1"/>
        <end position="50"/>
    </location>
</feature>
<accession>Q9IAK4</accession>
<accession>Q9I9K5</accession>
<protein>
    <recommendedName>
        <fullName>Noelin</fullName>
    </recommendedName>
    <alternativeName>
        <fullName>Neuronal olfactomedin-related ER localized protein</fullName>
    </alternativeName>
    <alternativeName>
        <fullName>Olfactomedin-1</fullName>
    </alternativeName>
    <alternativeName>
        <fullName>Pancortin</fullName>
    </alternativeName>
</protein>
<organism>
    <name type="scientific">Gallus gallus</name>
    <name type="common">Chicken</name>
    <dbReference type="NCBI Taxonomy" id="9031"/>
    <lineage>
        <taxon>Eukaryota</taxon>
        <taxon>Metazoa</taxon>
        <taxon>Chordata</taxon>
        <taxon>Craniata</taxon>
        <taxon>Vertebrata</taxon>
        <taxon>Euteleostomi</taxon>
        <taxon>Archelosauria</taxon>
        <taxon>Archosauria</taxon>
        <taxon>Dinosauria</taxon>
        <taxon>Saurischia</taxon>
        <taxon>Theropoda</taxon>
        <taxon>Coelurosauria</taxon>
        <taxon>Aves</taxon>
        <taxon>Neognathae</taxon>
        <taxon>Galloanserae</taxon>
        <taxon>Galliformes</taxon>
        <taxon>Phasianidae</taxon>
        <taxon>Phasianinae</taxon>
        <taxon>Gallus</taxon>
    </lineage>
</organism>
<reference key="1">
    <citation type="journal article" date="2000" name="Nat. Cell Biol.">
        <title>Noelin-1 is a secreted glycoprotein involved in generation of the neural crest.</title>
        <authorList>
            <person name="Barembaum M."/>
            <person name="Moreno T.A."/>
            <person name="LaBonne C."/>
            <person name="Sechrist J."/>
            <person name="Bronner-Fraser M."/>
        </authorList>
    </citation>
    <scope>NUCLEOTIDE SEQUENCE [MRNA] (ISOFORMS 1 AND 2)</scope>
    <scope>FUNCTION</scope>
    <scope>SUBCELLULAR LOCATION</scope>
    <scope>GLYCOSYLATION</scope>
</reference>
<gene>
    <name type="primary">OLFM1</name>
    <name type="synonym">NOEL</name>
    <name type="synonym">NOEL1</name>
</gene>
<name>NOE1_CHICK</name>
<evidence type="ECO:0000250" key="1">
    <source>
        <dbReference type="UniProtKB" id="O88998"/>
    </source>
</evidence>
<evidence type="ECO:0000255" key="2"/>
<evidence type="ECO:0000255" key="3">
    <source>
        <dbReference type="PROSITE-ProRule" id="PRU00446"/>
    </source>
</evidence>
<evidence type="ECO:0000269" key="4">
    <source>
    </source>
</evidence>
<evidence type="ECO:0000303" key="5">
    <source>
    </source>
</evidence>
<proteinExistence type="evidence at protein level"/>
<comment type="function">
    <text evidence="1 4">Contributes to the regulation of axonal growth (By similarity). May play an important role in regulating the production of neural crest cells by the neural tube.</text>
</comment>
<comment type="subunit">
    <text evidence="1">Homotetramer; disulfide-linked. Dimer of dimers, giving rise to a V-shaped homotretramer. Component of the AMPAR complex.</text>
</comment>
<comment type="subcellular location">
    <subcellularLocation>
        <location evidence="4">Secreted</location>
    </subcellularLocation>
    <subcellularLocation>
        <location evidence="1">Synapse</location>
    </subcellularLocation>
    <subcellularLocation>
        <location evidence="1">Endoplasmic reticulum</location>
    </subcellularLocation>
    <subcellularLocation>
        <location evidence="1">Cell projection</location>
        <location evidence="1">Axon</location>
    </subcellularLocation>
    <subcellularLocation>
        <location evidence="1">Perikaryon</location>
    </subcellularLocation>
</comment>
<comment type="alternative products">
    <event type="alternative splicing"/>
    <isoform>
        <id>Q9IAK4-1</id>
        <name>1</name>
        <name evidence="5">BMZ</name>
        <sequence type="displayed"/>
    </isoform>
    <isoform>
        <id>Q9IAK4-2</id>
        <name>2</name>
        <name evidence="5">AMZ</name>
        <sequence type="described" ref="VSP_003768"/>
    </isoform>
</comment>
<comment type="developmental stage">
    <text evidence="4">Expressed in a graded pattern in the closing neural tube. Subsequently becomes restricted to the dorsal neural folds and migrating neural crest.</text>
</comment>
<comment type="domain">
    <text evidence="1">The protein contains a globular N-terminal tetramerization domain, a long stalk formed by the coiled coil region and a C-terminal olfactomedin-like domain. Interactions between dimers are mediated by the coiled coil region. The dimers interact mostly via the N-terminal tetramerization domain, giving rise to a V-shaped overall architecture of the tetramer.</text>
</comment>
<comment type="PTM">
    <text evidence="4">Glycosylated.</text>
</comment>